<protein>
    <recommendedName>
        <fullName evidence="1">tRNA uridine(34) hydroxylase</fullName>
        <ecNumber evidence="1">1.14.-.-</ecNumber>
    </recommendedName>
    <alternativeName>
        <fullName evidence="1">tRNA hydroxylation protein O</fullName>
    </alternativeName>
</protein>
<sequence length="334" mass="37950">MTKVVVCALYKFVSLPHFESIRAPLLAMMEQAEVKGTLLLASEGINGTVAGNQEAIEALLAWLNNQNGLDNIVYKLSFDDEMPFYRTKVKLKNEIVTMGVEGIDPLKVVGTYVKPKDWNALISDPDVILVDTRNDYEVQIGTFKNAINPVTETFREFPEYVKQNLDPVKHKKVAMFCTGGIRCEKSTAYLKEQGFEEVYHLEGGILKYLEEVKQEESLWEGECFVFDNRVAVNHELKKGQYDQCNACRMPITEAEKRSPAYVQGVSCPHCVDKISDEQRKRFVERERQVNLAKARNEAHIGSDVNQVIEARREKKEALRKLAAQKNKLKQTGTV</sequence>
<keyword id="KW-0560">Oxidoreductase</keyword>
<keyword id="KW-0819">tRNA processing</keyword>
<organism>
    <name type="scientific">Shewanella putrefaciens (strain CN-32 / ATCC BAA-453)</name>
    <dbReference type="NCBI Taxonomy" id="319224"/>
    <lineage>
        <taxon>Bacteria</taxon>
        <taxon>Pseudomonadati</taxon>
        <taxon>Pseudomonadota</taxon>
        <taxon>Gammaproteobacteria</taxon>
        <taxon>Alteromonadales</taxon>
        <taxon>Shewanellaceae</taxon>
        <taxon>Shewanella</taxon>
    </lineage>
</organism>
<feature type="chain" id="PRO_1000013773" description="tRNA uridine(34) hydroxylase">
    <location>
        <begin position="1"/>
        <end position="334"/>
    </location>
</feature>
<feature type="domain" description="Rhodanese" evidence="1">
    <location>
        <begin position="123"/>
        <end position="217"/>
    </location>
</feature>
<feature type="active site" description="Cysteine persulfide intermediate" evidence="1">
    <location>
        <position position="177"/>
    </location>
</feature>
<dbReference type="EC" id="1.14.-.-" evidence="1"/>
<dbReference type="EMBL" id="CP000681">
    <property type="protein sequence ID" value="ABP75851.1"/>
    <property type="molecule type" value="Genomic_DNA"/>
</dbReference>
<dbReference type="SMR" id="A4Y7B8"/>
<dbReference type="STRING" id="319224.Sputcn32_2130"/>
<dbReference type="KEGG" id="spc:Sputcn32_2130"/>
<dbReference type="eggNOG" id="COG1054">
    <property type="taxonomic scope" value="Bacteria"/>
</dbReference>
<dbReference type="HOGENOM" id="CLU_038878_0_0_6"/>
<dbReference type="GO" id="GO:0016705">
    <property type="term" value="F:oxidoreductase activity, acting on paired donors, with incorporation or reduction of molecular oxygen"/>
    <property type="evidence" value="ECO:0007669"/>
    <property type="project" value="UniProtKB-UniRule"/>
</dbReference>
<dbReference type="GO" id="GO:0006400">
    <property type="term" value="P:tRNA modification"/>
    <property type="evidence" value="ECO:0007669"/>
    <property type="project" value="UniProtKB-UniRule"/>
</dbReference>
<dbReference type="CDD" id="cd01518">
    <property type="entry name" value="RHOD_YceA"/>
    <property type="match status" value="1"/>
</dbReference>
<dbReference type="Gene3D" id="3.30.70.100">
    <property type="match status" value="1"/>
</dbReference>
<dbReference type="Gene3D" id="3.40.250.10">
    <property type="entry name" value="Rhodanese-like domain"/>
    <property type="match status" value="1"/>
</dbReference>
<dbReference type="HAMAP" id="MF_00469">
    <property type="entry name" value="TrhO"/>
    <property type="match status" value="1"/>
</dbReference>
<dbReference type="InterPro" id="IPR001763">
    <property type="entry name" value="Rhodanese-like_dom"/>
</dbReference>
<dbReference type="InterPro" id="IPR036873">
    <property type="entry name" value="Rhodanese-like_dom_sf"/>
</dbReference>
<dbReference type="InterPro" id="IPR020936">
    <property type="entry name" value="TrhO"/>
</dbReference>
<dbReference type="InterPro" id="IPR040503">
    <property type="entry name" value="TRHO_N"/>
</dbReference>
<dbReference type="NCBIfam" id="NF001136">
    <property type="entry name" value="PRK00142.1-4"/>
    <property type="match status" value="1"/>
</dbReference>
<dbReference type="PANTHER" id="PTHR43268:SF3">
    <property type="entry name" value="RHODANESE-LIKE DOMAIN-CONTAINING PROTEIN 7-RELATED"/>
    <property type="match status" value="1"/>
</dbReference>
<dbReference type="PANTHER" id="PTHR43268">
    <property type="entry name" value="THIOSULFATE SULFURTRANSFERASE/RHODANESE-LIKE DOMAIN-CONTAINING PROTEIN 2"/>
    <property type="match status" value="1"/>
</dbReference>
<dbReference type="Pfam" id="PF00581">
    <property type="entry name" value="Rhodanese"/>
    <property type="match status" value="1"/>
</dbReference>
<dbReference type="Pfam" id="PF17773">
    <property type="entry name" value="UPF0176_N"/>
    <property type="match status" value="1"/>
</dbReference>
<dbReference type="SMART" id="SM00450">
    <property type="entry name" value="RHOD"/>
    <property type="match status" value="1"/>
</dbReference>
<dbReference type="SUPFAM" id="SSF52821">
    <property type="entry name" value="Rhodanese/Cell cycle control phosphatase"/>
    <property type="match status" value="1"/>
</dbReference>
<dbReference type="PROSITE" id="PS50206">
    <property type="entry name" value="RHODANESE_3"/>
    <property type="match status" value="1"/>
</dbReference>
<comment type="function">
    <text evidence="1">Catalyzes oxygen-dependent 5-hydroxyuridine (ho5U) modification at position 34 in tRNAs.</text>
</comment>
<comment type="catalytic activity">
    <reaction evidence="1">
        <text>uridine(34) in tRNA + AH2 + O2 = 5-hydroxyuridine(34) in tRNA + A + H2O</text>
        <dbReference type="Rhea" id="RHEA:64224"/>
        <dbReference type="Rhea" id="RHEA-COMP:11727"/>
        <dbReference type="Rhea" id="RHEA-COMP:13381"/>
        <dbReference type="ChEBI" id="CHEBI:13193"/>
        <dbReference type="ChEBI" id="CHEBI:15377"/>
        <dbReference type="ChEBI" id="CHEBI:15379"/>
        <dbReference type="ChEBI" id="CHEBI:17499"/>
        <dbReference type="ChEBI" id="CHEBI:65315"/>
        <dbReference type="ChEBI" id="CHEBI:136877"/>
    </reaction>
</comment>
<comment type="similarity">
    <text evidence="1">Belongs to the TrhO family.</text>
</comment>
<name>TRHO_SHEPC</name>
<proteinExistence type="inferred from homology"/>
<accession>A4Y7B8</accession>
<gene>
    <name evidence="1" type="primary">trhO</name>
    <name type="ordered locus">Sputcn32_2130</name>
</gene>
<reference key="1">
    <citation type="submission" date="2007-04" db="EMBL/GenBank/DDBJ databases">
        <title>Complete sequence of Shewanella putrefaciens CN-32.</title>
        <authorList>
            <consortium name="US DOE Joint Genome Institute"/>
            <person name="Copeland A."/>
            <person name="Lucas S."/>
            <person name="Lapidus A."/>
            <person name="Barry K."/>
            <person name="Detter J.C."/>
            <person name="Glavina del Rio T."/>
            <person name="Hammon N."/>
            <person name="Israni S."/>
            <person name="Dalin E."/>
            <person name="Tice H."/>
            <person name="Pitluck S."/>
            <person name="Chain P."/>
            <person name="Malfatti S."/>
            <person name="Shin M."/>
            <person name="Vergez L."/>
            <person name="Schmutz J."/>
            <person name="Larimer F."/>
            <person name="Land M."/>
            <person name="Hauser L."/>
            <person name="Kyrpides N."/>
            <person name="Mikhailova N."/>
            <person name="Romine M.F."/>
            <person name="Fredrickson J."/>
            <person name="Tiedje J."/>
            <person name="Richardson P."/>
        </authorList>
    </citation>
    <scope>NUCLEOTIDE SEQUENCE [LARGE SCALE GENOMIC DNA]</scope>
    <source>
        <strain>CN-32 / ATCC BAA-453</strain>
    </source>
</reference>
<evidence type="ECO:0000255" key="1">
    <source>
        <dbReference type="HAMAP-Rule" id="MF_00469"/>
    </source>
</evidence>